<evidence type="ECO:0000250" key="1"/>
<evidence type="ECO:0000305" key="2"/>
<proteinExistence type="inferred from homology"/>
<keyword id="KW-0489">Methyltransferase</keyword>
<keyword id="KW-0949">S-adenosyl-L-methionine</keyword>
<keyword id="KW-0808">Transferase</keyword>
<comment type="function">
    <text evidence="1">Exhibits S-adenosyl-L-methionine-dependent methyltransferase activity.</text>
</comment>
<comment type="similarity">
    <text evidence="2">Belongs to the UPF0677 family.</text>
</comment>
<gene>
    <name type="ordered locus">MUL_0817</name>
</gene>
<reference key="1">
    <citation type="journal article" date="2007" name="Genome Res.">
        <title>Reductive evolution and niche adaptation inferred from the genome of Mycobacterium ulcerans, the causative agent of Buruli ulcer.</title>
        <authorList>
            <person name="Stinear T.P."/>
            <person name="Seemann T."/>
            <person name="Pidot S."/>
            <person name="Frigui W."/>
            <person name="Reysset G."/>
            <person name="Garnier T."/>
            <person name="Meurice G."/>
            <person name="Simon D."/>
            <person name="Bouchier C."/>
            <person name="Ma L."/>
            <person name="Tichit M."/>
            <person name="Porter J.L."/>
            <person name="Ryan J."/>
            <person name="Johnson P.D.R."/>
            <person name="Davies J.K."/>
            <person name="Jenkin G.A."/>
            <person name="Small P.L.C."/>
            <person name="Jones L.M."/>
            <person name="Tekaia F."/>
            <person name="Laval F."/>
            <person name="Daffe M."/>
            <person name="Parkhill J."/>
            <person name="Cole S.T."/>
        </authorList>
    </citation>
    <scope>NUCLEOTIDE SEQUENCE [LARGE SCALE GENOMIC DNA]</scope>
    <source>
        <strain>Agy99</strain>
    </source>
</reference>
<protein>
    <recommendedName>
        <fullName>Putative S-adenosyl-L-methionine-dependent methyltransferase MUL_0817</fullName>
        <ecNumber>2.1.1.-</ecNumber>
    </recommendedName>
</protein>
<sequence length="300" mass="33338">MNRRTDADSWDPASSVGATATMVAASRARASRGPDALLDDRLAGPLVRAVGLQPLVRMIDGDTAVDDPPSSPRSLNEQIAVRTRYFDDFFTAAGAGGIRQAVILASGLDTRAYRLNWPSGMTVYEIDQPQVIEFKTRTLAEFGALPCPDHRPIGIDLREDWPSALRQRGFDAGQPTAWIAEGLLVYLPPEAQDRLFDNIAELSTPRSQVATEHFPDPNGFSGPRAQRLSERWHRMGMDLDMAELIYHGDRNTVIDYLADHGWRVRARTFEEMHAHNGFEPPDDEMMALFGGMSYVTGIRK</sequence>
<name>Y817_MYCUA</name>
<accession>A0PM88</accession>
<dbReference type="EC" id="2.1.1.-"/>
<dbReference type="EMBL" id="CP000325">
    <property type="protein sequence ID" value="ABL03457.1"/>
    <property type="molecule type" value="Genomic_DNA"/>
</dbReference>
<dbReference type="RefSeq" id="WP_011739082.1">
    <property type="nucleotide sequence ID" value="NC_008611.1"/>
</dbReference>
<dbReference type="SMR" id="A0PM88"/>
<dbReference type="KEGG" id="mul:MUL_0817"/>
<dbReference type="eggNOG" id="COG3315">
    <property type="taxonomic scope" value="Bacteria"/>
</dbReference>
<dbReference type="HOGENOM" id="CLU_056160_2_1_11"/>
<dbReference type="Proteomes" id="UP000000765">
    <property type="component" value="Chromosome"/>
</dbReference>
<dbReference type="GO" id="GO:0008168">
    <property type="term" value="F:methyltransferase activity"/>
    <property type="evidence" value="ECO:0007669"/>
    <property type="project" value="UniProtKB-KW"/>
</dbReference>
<dbReference type="GO" id="GO:0032259">
    <property type="term" value="P:methylation"/>
    <property type="evidence" value="ECO:0007669"/>
    <property type="project" value="UniProtKB-KW"/>
</dbReference>
<dbReference type="Gene3D" id="3.40.50.150">
    <property type="entry name" value="Vaccinia Virus protein VP39"/>
    <property type="match status" value="1"/>
</dbReference>
<dbReference type="InterPro" id="IPR007213">
    <property type="entry name" value="Ppm1/Ppm2/Tcmp"/>
</dbReference>
<dbReference type="InterPro" id="IPR029063">
    <property type="entry name" value="SAM-dependent_MTases_sf"/>
</dbReference>
<dbReference type="InterPro" id="IPR011610">
    <property type="entry name" value="SAM_mthyl_Trfase_ML2640-like"/>
</dbReference>
<dbReference type="NCBIfam" id="TIGR00027">
    <property type="entry name" value="mthyl_TIGR00027"/>
    <property type="match status" value="1"/>
</dbReference>
<dbReference type="PANTHER" id="PTHR43619">
    <property type="entry name" value="S-ADENOSYL-L-METHIONINE-DEPENDENT METHYLTRANSFERASE YKTD-RELATED"/>
    <property type="match status" value="1"/>
</dbReference>
<dbReference type="PANTHER" id="PTHR43619:SF2">
    <property type="entry name" value="S-ADENOSYL-L-METHIONINE-DEPENDENT METHYLTRANSFERASES SUPERFAMILY PROTEIN"/>
    <property type="match status" value="1"/>
</dbReference>
<dbReference type="Pfam" id="PF04072">
    <property type="entry name" value="LCM"/>
    <property type="match status" value="1"/>
</dbReference>
<dbReference type="SUPFAM" id="SSF53335">
    <property type="entry name" value="S-adenosyl-L-methionine-dependent methyltransferases"/>
    <property type="match status" value="1"/>
</dbReference>
<feature type="chain" id="PRO_0000361255" description="Putative S-adenosyl-L-methionine-dependent methyltransferase MUL_0817">
    <location>
        <begin position="1"/>
        <end position="300"/>
    </location>
</feature>
<feature type="binding site" evidence="1">
    <location>
        <position position="127"/>
    </location>
    <ligand>
        <name>S-adenosyl-L-methionine</name>
        <dbReference type="ChEBI" id="CHEBI:59789"/>
    </ligand>
</feature>
<feature type="binding site" evidence="1">
    <location>
        <begin position="156"/>
        <end position="157"/>
    </location>
    <ligand>
        <name>S-adenosyl-L-methionine</name>
        <dbReference type="ChEBI" id="CHEBI:59789"/>
    </ligand>
</feature>
<organism>
    <name type="scientific">Mycobacterium ulcerans (strain Agy99)</name>
    <dbReference type="NCBI Taxonomy" id="362242"/>
    <lineage>
        <taxon>Bacteria</taxon>
        <taxon>Bacillati</taxon>
        <taxon>Actinomycetota</taxon>
        <taxon>Actinomycetes</taxon>
        <taxon>Mycobacteriales</taxon>
        <taxon>Mycobacteriaceae</taxon>
        <taxon>Mycobacterium</taxon>
        <taxon>Mycobacterium ulcerans group</taxon>
    </lineage>
</organism>